<reference key="1">
    <citation type="journal article" date="2007" name="J. Bacteriol.">
        <title>The complete genome sequence of Bacillus thuringiensis Al Hakam.</title>
        <authorList>
            <person name="Challacombe J.F."/>
            <person name="Altherr M.R."/>
            <person name="Xie G."/>
            <person name="Bhotika S.S."/>
            <person name="Brown N."/>
            <person name="Bruce D."/>
            <person name="Campbell C.S."/>
            <person name="Campbell M.L."/>
            <person name="Chen J."/>
            <person name="Chertkov O."/>
            <person name="Cleland C."/>
            <person name="Dimitrijevic M."/>
            <person name="Doggett N.A."/>
            <person name="Fawcett J.J."/>
            <person name="Glavina T."/>
            <person name="Goodwin L.A."/>
            <person name="Green L.D."/>
            <person name="Han C.S."/>
            <person name="Hill K.K."/>
            <person name="Hitchcock P."/>
            <person name="Jackson P.J."/>
            <person name="Keim P."/>
            <person name="Kewalramani A.R."/>
            <person name="Longmire J."/>
            <person name="Lucas S."/>
            <person name="Malfatti S."/>
            <person name="Martinez D."/>
            <person name="McMurry K."/>
            <person name="Meincke L.J."/>
            <person name="Misra M."/>
            <person name="Moseman B.L."/>
            <person name="Mundt M."/>
            <person name="Munk A.C."/>
            <person name="Okinaka R.T."/>
            <person name="Parson-Quintana B."/>
            <person name="Reilly L.P."/>
            <person name="Richardson P."/>
            <person name="Robinson D.L."/>
            <person name="Saunders E."/>
            <person name="Tapia R."/>
            <person name="Tesmer J.G."/>
            <person name="Thayer N."/>
            <person name="Thompson L.S."/>
            <person name="Tice H."/>
            <person name="Ticknor L.O."/>
            <person name="Wills P.L."/>
            <person name="Gilna P."/>
            <person name="Brettin T.S."/>
        </authorList>
    </citation>
    <scope>NUCLEOTIDE SEQUENCE [LARGE SCALE GENOMIC DNA]</scope>
    <source>
        <strain>Al Hakam</strain>
    </source>
</reference>
<feature type="chain" id="PRO_1000049635" description="Large ribosomal subunit protein bL19">
    <location>
        <begin position="1"/>
        <end position="114"/>
    </location>
</feature>
<name>RL19_BACAH</name>
<proteinExistence type="inferred from homology"/>
<dbReference type="EMBL" id="CP000485">
    <property type="protein sequence ID" value="ABK86706.1"/>
    <property type="molecule type" value="Genomic_DNA"/>
</dbReference>
<dbReference type="RefSeq" id="WP_001186516.1">
    <property type="nucleotide sequence ID" value="NC_008600.1"/>
</dbReference>
<dbReference type="SMR" id="A0RHL3"/>
<dbReference type="GeneID" id="93007272"/>
<dbReference type="KEGG" id="btl:BALH_3471"/>
<dbReference type="HOGENOM" id="CLU_103507_2_1_9"/>
<dbReference type="GO" id="GO:0022625">
    <property type="term" value="C:cytosolic large ribosomal subunit"/>
    <property type="evidence" value="ECO:0007669"/>
    <property type="project" value="TreeGrafter"/>
</dbReference>
<dbReference type="GO" id="GO:0003735">
    <property type="term" value="F:structural constituent of ribosome"/>
    <property type="evidence" value="ECO:0007669"/>
    <property type="project" value="InterPro"/>
</dbReference>
<dbReference type="GO" id="GO:0006412">
    <property type="term" value="P:translation"/>
    <property type="evidence" value="ECO:0007669"/>
    <property type="project" value="UniProtKB-UniRule"/>
</dbReference>
<dbReference type="FunFam" id="2.30.30.790:FF:000001">
    <property type="entry name" value="50S ribosomal protein L19"/>
    <property type="match status" value="1"/>
</dbReference>
<dbReference type="Gene3D" id="2.30.30.790">
    <property type="match status" value="1"/>
</dbReference>
<dbReference type="HAMAP" id="MF_00402">
    <property type="entry name" value="Ribosomal_bL19"/>
    <property type="match status" value="1"/>
</dbReference>
<dbReference type="InterPro" id="IPR001857">
    <property type="entry name" value="Ribosomal_bL19"/>
</dbReference>
<dbReference type="InterPro" id="IPR018257">
    <property type="entry name" value="Ribosomal_bL19_CS"/>
</dbReference>
<dbReference type="InterPro" id="IPR038657">
    <property type="entry name" value="Ribosomal_bL19_sf"/>
</dbReference>
<dbReference type="InterPro" id="IPR008991">
    <property type="entry name" value="Translation_prot_SH3-like_sf"/>
</dbReference>
<dbReference type="NCBIfam" id="TIGR01024">
    <property type="entry name" value="rplS_bact"/>
    <property type="match status" value="1"/>
</dbReference>
<dbReference type="PANTHER" id="PTHR15680:SF9">
    <property type="entry name" value="LARGE RIBOSOMAL SUBUNIT PROTEIN BL19M"/>
    <property type="match status" value="1"/>
</dbReference>
<dbReference type="PANTHER" id="PTHR15680">
    <property type="entry name" value="RIBOSOMAL PROTEIN L19"/>
    <property type="match status" value="1"/>
</dbReference>
<dbReference type="Pfam" id="PF01245">
    <property type="entry name" value="Ribosomal_L19"/>
    <property type="match status" value="1"/>
</dbReference>
<dbReference type="PIRSF" id="PIRSF002191">
    <property type="entry name" value="Ribosomal_L19"/>
    <property type="match status" value="1"/>
</dbReference>
<dbReference type="PRINTS" id="PR00061">
    <property type="entry name" value="RIBOSOMALL19"/>
</dbReference>
<dbReference type="SUPFAM" id="SSF50104">
    <property type="entry name" value="Translation proteins SH3-like domain"/>
    <property type="match status" value="1"/>
</dbReference>
<dbReference type="PROSITE" id="PS01015">
    <property type="entry name" value="RIBOSOMAL_L19"/>
    <property type="match status" value="1"/>
</dbReference>
<gene>
    <name evidence="1" type="primary">rplS</name>
    <name type="ordered locus">BALH_3471</name>
</gene>
<organism>
    <name type="scientific">Bacillus thuringiensis (strain Al Hakam)</name>
    <dbReference type="NCBI Taxonomy" id="412694"/>
    <lineage>
        <taxon>Bacteria</taxon>
        <taxon>Bacillati</taxon>
        <taxon>Bacillota</taxon>
        <taxon>Bacilli</taxon>
        <taxon>Bacillales</taxon>
        <taxon>Bacillaceae</taxon>
        <taxon>Bacillus</taxon>
        <taxon>Bacillus cereus group</taxon>
    </lineage>
</organism>
<keyword id="KW-0687">Ribonucleoprotein</keyword>
<keyword id="KW-0689">Ribosomal protein</keyword>
<comment type="function">
    <text evidence="1">This protein is located at the 30S-50S ribosomal subunit interface and may play a role in the structure and function of the aminoacyl-tRNA binding site.</text>
</comment>
<comment type="similarity">
    <text evidence="1">Belongs to the bacterial ribosomal protein bL19 family.</text>
</comment>
<evidence type="ECO:0000255" key="1">
    <source>
        <dbReference type="HAMAP-Rule" id="MF_00402"/>
    </source>
</evidence>
<evidence type="ECO:0000305" key="2"/>
<accession>A0RHL3</accession>
<protein>
    <recommendedName>
        <fullName evidence="1">Large ribosomal subunit protein bL19</fullName>
    </recommendedName>
    <alternativeName>
        <fullName evidence="2">50S ribosomal protein L19</fullName>
    </alternativeName>
</protein>
<sequence>MQQLIAEITKGQLKTDLPSFRPGDTLRVHVKVVEGTRERIQLFEGVVIKRRGGGISETFTVRKISYGVGVERTFPVHTPRIAKIEVLRRGKVRRAKLYYLRNLRGKKARIKEIR</sequence>